<name>NIKR_METAR</name>
<reference key="1">
    <citation type="journal article" date="2006" name="Science">
        <title>Genome of rice cluster I archaea -- the key methane producers in the rice rhizosphere.</title>
        <authorList>
            <person name="Erkel C."/>
            <person name="Kube M."/>
            <person name="Reinhardt R."/>
            <person name="Liesack W."/>
        </authorList>
    </citation>
    <scope>NUCLEOTIDE SEQUENCE [LARGE SCALE GENOMIC DNA]</scope>
    <source>
        <strain>DSM 22066 / NBRC 105507 / MRE50</strain>
    </source>
</reference>
<protein>
    <recommendedName>
        <fullName evidence="1">Putative nickel-responsive regulator</fullName>
    </recommendedName>
</protein>
<organism>
    <name type="scientific">Methanocella arvoryzae (strain DSM 22066 / NBRC 105507 / MRE50)</name>
    <dbReference type="NCBI Taxonomy" id="351160"/>
    <lineage>
        <taxon>Archaea</taxon>
        <taxon>Methanobacteriati</taxon>
        <taxon>Methanobacteriota</taxon>
        <taxon>Stenosarchaea group</taxon>
        <taxon>Methanomicrobia</taxon>
        <taxon>Methanocellales</taxon>
        <taxon>Methanocellaceae</taxon>
        <taxon>Methanocella</taxon>
    </lineage>
</organism>
<evidence type="ECO:0000255" key="1">
    <source>
        <dbReference type="HAMAP-Rule" id="MF_00476"/>
    </source>
</evidence>
<keyword id="KW-0238">DNA-binding</keyword>
<keyword id="KW-0479">Metal-binding</keyword>
<keyword id="KW-0533">Nickel</keyword>
<keyword id="KW-1185">Reference proteome</keyword>
<keyword id="KW-0804">Transcription</keyword>
<keyword id="KW-0805">Transcription regulation</keyword>
<dbReference type="EMBL" id="AM114193">
    <property type="protein sequence ID" value="CAJ37931.1"/>
    <property type="molecule type" value="Genomic_DNA"/>
</dbReference>
<dbReference type="RefSeq" id="WP_012034663.1">
    <property type="nucleotide sequence ID" value="NC_009464.1"/>
</dbReference>
<dbReference type="SMR" id="Q0W112"/>
<dbReference type="STRING" id="351160.RRC178"/>
<dbReference type="GeneID" id="5142915"/>
<dbReference type="KEGG" id="rci:RRC178"/>
<dbReference type="PATRIC" id="fig|351160.9.peg.352"/>
<dbReference type="eggNOG" id="arCOG01008">
    <property type="taxonomic scope" value="Archaea"/>
</dbReference>
<dbReference type="OrthoDB" id="25654at2157"/>
<dbReference type="Proteomes" id="UP000000663">
    <property type="component" value="Chromosome"/>
</dbReference>
<dbReference type="GO" id="GO:0003677">
    <property type="term" value="F:DNA binding"/>
    <property type="evidence" value="ECO:0007669"/>
    <property type="project" value="UniProtKB-KW"/>
</dbReference>
<dbReference type="GO" id="GO:0003700">
    <property type="term" value="F:DNA-binding transcription factor activity"/>
    <property type="evidence" value="ECO:0007669"/>
    <property type="project" value="UniProtKB-UniRule"/>
</dbReference>
<dbReference type="GO" id="GO:0016151">
    <property type="term" value="F:nickel cation binding"/>
    <property type="evidence" value="ECO:0007669"/>
    <property type="project" value="UniProtKB-UniRule"/>
</dbReference>
<dbReference type="GO" id="GO:0010045">
    <property type="term" value="P:response to nickel cation"/>
    <property type="evidence" value="ECO:0007669"/>
    <property type="project" value="InterPro"/>
</dbReference>
<dbReference type="CDD" id="cd22231">
    <property type="entry name" value="RHH_NikR_HicB-like"/>
    <property type="match status" value="1"/>
</dbReference>
<dbReference type="Gene3D" id="3.30.70.1150">
    <property type="entry name" value="ACT-like. Chain A, domain 2"/>
    <property type="match status" value="1"/>
</dbReference>
<dbReference type="Gene3D" id="1.10.1220.10">
    <property type="entry name" value="Met repressor-like"/>
    <property type="match status" value="1"/>
</dbReference>
<dbReference type="HAMAP" id="MF_00476">
    <property type="entry name" value="NikR"/>
    <property type="match status" value="1"/>
</dbReference>
<dbReference type="InterPro" id="IPR027271">
    <property type="entry name" value="Acetolactate_synth/TF_NikR_C"/>
</dbReference>
<dbReference type="InterPro" id="IPR045865">
    <property type="entry name" value="ACT-like_dom_sf"/>
</dbReference>
<dbReference type="InterPro" id="IPR013321">
    <property type="entry name" value="Arc_rbn_hlx_hlx"/>
</dbReference>
<dbReference type="InterPro" id="IPR002145">
    <property type="entry name" value="CopG"/>
</dbReference>
<dbReference type="InterPro" id="IPR050192">
    <property type="entry name" value="CopG/NikR_regulator"/>
</dbReference>
<dbReference type="InterPro" id="IPR022988">
    <property type="entry name" value="Ni_resp_reg_NikR"/>
</dbReference>
<dbReference type="InterPro" id="IPR010985">
    <property type="entry name" value="Ribbon_hlx_hlx"/>
</dbReference>
<dbReference type="InterPro" id="IPR014864">
    <property type="entry name" value="TF_NikR_Ni-bd_C"/>
</dbReference>
<dbReference type="NCBIfam" id="NF001884">
    <property type="entry name" value="PRK00630.1"/>
    <property type="match status" value="1"/>
</dbReference>
<dbReference type="NCBIfam" id="NF002169">
    <property type="entry name" value="PRK01002.1"/>
    <property type="match status" value="1"/>
</dbReference>
<dbReference type="NCBIfam" id="NF002815">
    <property type="entry name" value="PRK02967.1"/>
    <property type="match status" value="1"/>
</dbReference>
<dbReference type="NCBIfam" id="NF003381">
    <property type="entry name" value="PRK04460.1"/>
    <property type="match status" value="1"/>
</dbReference>
<dbReference type="PANTHER" id="PTHR34719">
    <property type="entry name" value="NICKEL-RESPONSIVE REGULATOR"/>
    <property type="match status" value="1"/>
</dbReference>
<dbReference type="PANTHER" id="PTHR34719:SF2">
    <property type="entry name" value="NICKEL-RESPONSIVE REGULATOR"/>
    <property type="match status" value="1"/>
</dbReference>
<dbReference type="Pfam" id="PF08753">
    <property type="entry name" value="NikR_C"/>
    <property type="match status" value="1"/>
</dbReference>
<dbReference type="Pfam" id="PF01402">
    <property type="entry name" value="RHH_1"/>
    <property type="match status" value="1"/>
</dbReference>
<dbReference type="SUPFAM" id="SSF55021">
    <property type="entry name" value="ACT-like"/>
    <property type="match status" value="1"/>
</dbReference>
<dbReference type="SUPFAM" id="SSF47598">
    <property type="entry name" value="Ribbon-helix-helix"/>
    <property type="match status" value="1"/>
</dbReference>
<comment type="function">
    <text evidence="1">Transcriptional regulator.</text>
</comment>
<comment type="cofactor">
    <cofactor evidence="1">
        <name>Ni(2+)</name>
        <dbReference type="ChEBI" id="CHEBI:49786"/>
    </cofactor>
    <text evidence="1">Binds 1 nickel ion per subunit.</text>
</comment>
<comment type="similarity">
    <text evidence="1">Belongs to the transcriptional regulatory CopG/NikR family.</text>
</comment>
<accession>Q0W112</accession>
<gene>
    <name type="ordered locus">UNCMA_03340</name>
    <name type="ORF">RRC178</name>
</gene>
<sequence>MDQELMRIGVSLPDNLLDRFDNIIEKRGYSSRSEGIRDAIRNYIMHYEWMNEVEGERIGVITLIYDHDQRGLVNNLTDIQHEYMGMIKSSVHVHLDHDNCLELIMLQGEGKQVKEVAEKMMALKGVKHVKLTTVSPNTEL</sequence>
<proteinExistence type="inferred from homology"/>
<feature type="chain" id="PRO_1000014085" description="Putative nickel-responsive regulator">
    <location>
        <begin position="1"/>
        <end position="140"/>
    </location>
</feature>
<feature type="binding site" evidence="1">
    <location>
        <position position="81"/>
    </location>
    <ligand>
        <name>Ni(2+)</name>
        <dbReference type="ChEBI" id="CHEBI:49786"/>
    </ligand>
</feature>
<feature type="binding site" evidence="1">
    <location>
        <position position="92"/>
    </location>
    <ligand>
        <name>Ni(2+)</name>
        <dbReference type="ChEBI" id="CHEBI:49786"/>
    </ligand>
</feature>
<feature type="binding site" evidence="1">
    <location>
        <position position="94"/>
    </location>
    <ligand>
        <name>Ni(2+)</name>
        <dbReference type="ChEBI" id="CHEBI:49786"/>
    </ligand>
</feature>
<feature type="binding site" evidence="1">
    <location>
        <position position="100"/>
    </location>
    <ligand>
        <name>Ni(2+)</name>
        <dbReference type="ChEBI" id="CHEBI:49786"/>
    </ligand>
</feature>